<evidence type="ECO:0000255" key="1">
    <source>
        <dbReference type="HAMAP-Rule" id="MF_01001"/>
    </source>
</evidence>
<dbReference type="EC" id="2.4.1.180" evidence="1"/>
<dbReference type="EMBL" id="BX950851">
    <property type="protein sequence ID" value="CAG77097.1"/>
    <property type="molecule type" value="Genomic_DNA"/>
</dbReference>
<dbReference type="RefSeq" id="WP_011095671.1">
    <property type="nucleotide sequence ID" value="NC_004547.2"/>
</dbReference>
<dbReference type="SMR" id="Q6CZF2"/>
<dbReference type="STRING" id="218491.ECA4200"/>
<dbReference type="CAZy" id="GT26">
    <property type="family name" value="Glycosyltransferase Family 26"/>
</dbReference>
<dbReference type="GeneID" id="57210866"/>
<dbReference type="KEGG" id="eca:ECA4200"/>
<dbReference type="PATRIC" id="fig|218491.5.peg.4276"/>
<dbReference type="eggNOG" id="COG1922">
    <property type="taxonomic scope" value="Bacteria"/>
</dbReference>
<dbReference type="HOGENOM" id="CLU_063203_3_2_6"/>
<dbReference type="OrthoDB" id="9808602at2"/>
<dbReference type="UniPathway" id="UPA00566"/>
<dbReference type="Proteomes" id="UP000007966">
    <property type="component" value="Chromosome"/>
</dbReference>
<dbReference type="GO" id="GO:0047241">
    <property type="term" value="F:lipopolysaccharide N-acetylmannosaminouronosyltransferase activity"/>
    <property type="evidence" value="ECO:0007669"/>
    <property type="project" value="UniProtKB-UniRule"/>
</dbReference>
<dbReference type="GO" id="GO:0009246">
    <property type="term" value="P:enterobacterial common antigen biosynthetic process"/>
    <property type="evidence" value="ECO:0007669"/>
    <property type="project" value="UniProtKB-UniRule"/>
</dbReference>
<dbReference type="CDD" id="cd06533">
    <property type="entry name" value="Glyco_transf_WecG_TagA"/>
    <property type="match status" value="1"/>
</dbReference>
<dbReference type="HAMAP" id="MF_01001">
    <property type="entry name" value="WecG_RffM"/>
    <property type="match status" value="1"/>
</dbReference>
<dbReference type="InterPro" id="IPR023085">
    <property type="entry name" value="UDP-ManNAcA_Trfase_WecG"/>
</dbReference>
<dbReference type="InterPro" id="IPR004629">
    <property type="entry name" value="WecG_TagA_CpsF"/>
</dbReference>
<dbReference type="NCBIfam" id="NF002980">
    <property type="entry name" value="PRK03692.1"/>
    <property type="match status" value="1"/>
</dbReference>
<dbReference type="NCBIfam" id="TIGR00696">
    <property type="entry name" value="wecG_tagA_cpsF"/>
    <property type="match status" value="1"/>
</dbReference>
<dbReference type="PANTHER" id="PTHR34136">
    <property type="match status" value="1"/>
</dbReference>
<dbReference type="PANTHER" id="PTHR34136:SF1">
    <property type="entry name" value="UDP-N-ACETYL-D-MANNOSAMINURONIC ACID TRANSFERASE"/>
    <property type="match status" value="1"/>
</dbReference>
<dbReference type="Pfam" id="PF03808">
    <property type="entry name" value="Glyco_tran_WecG"/>
    <property type="match status" value="1"/>
</dbReference>
<proteinExistence type="inferred from homology"/>
<gene>
    <name evidence="1" type="primary">wecG</name>
    <name evidence="1" type="synonym">rffM</name>
    <name type="ordered locus">ECA4200</name>
</gene>
<sequence length="249" mass="28282">MTALKTTETIPLYTIRGLPIHGFRNMGTFVDYLFAGERVETGTLVAINAEKVLTAEKEVALRTLLDRAEYKYADGISIVRSIRRKYPQADVTRIAGADLWEALMERAGKQETPVFLVGGKPDVLAQTEAKLRAQWDVNIVGSQDGYFTPEQRDALFERIRASGAQIVTVAMGSPRQEILMRDCRHHYPDALYMGIGGTYDVFTGHVKRAPLVWQNLGLEWLYRLLSQPSRIFRQLRLLKYVAYHYSGRL</sequence>
<keyword id="KW-0328">Glycosyltransferase</keyword>
<keyword id="KW-1185">Reference proteome</keyword>
<keyword id="KW-0808">Transferase</keyword>
<name>WECG_PECAS</name>
<reference key="1">
    <citation type="journal article" date="2004" name="Proc. Natl. Acad. Sci. U.S.A.">
        <title>Genome sequence of the enterobacterial phytopathogen Erwinia carotovora subsp. atroseptica and characterization of virulence factors.</title>
        <authorList>
            <person name="Bell K.S."/>
            <person name="Sebaihia M."/>
            <person name="Pritchard L."/>
            <person name="Holden M.T.G."/>
            <person name="Hyman L.J."/>
            <person name="Holeva M.C."/>
            <person name="Thomson N.R."/>
            <person name="Bentley S.D."/>
            <person name="Churcher L.J.C."/>
            <person name="Mungall K."/>
            <person name="Atkin R."/>
            <person name="Bason N."/>
            <person name="Brooks K."/>
            <person name="Chillingworth T."/>
            <person name="Clark K."/>
            <person name="Doggett J."/>
            <person name="Fraser A."/>
            <person name="Hance Z."/>
            <person name="Hauser H."/>
            <person name="Jagels K."/>
            <person name="Moule S."/>
            <person name="Norbertczak H."/>
            <person name="Ormond D."/>
            <person name="Price C."/>
            <person name="Quail M.A."/>
            <person name="Sanders M."/>
            <person name="Walker D."/>
            <person name="Whitehead S."/>
            <person name="Salmond G.P.C."/>
            <person name="Birch P.R.J."/>
            <person name="Parkhill J."/>
            <person name="Toth I.K."/>
        </authorList>
    </citation>
    <scope>NUCLEOTIDE SEQUENCE [LARGE SCALE GENOMIC DNA]</scope>
    <source>
        <strain>SCRI 1043 / ATCC BAA-672</strain>
    </source>
</reference>
<organism>
    <name type="scientific">Pectobacterium atrosepticum (strain SCRI 1043 / ATCC BAA-672)</name>
    <name type="common">Erwinia carotovora subsp. atroseptica</name>
    <dbReference type="NCBI Taxonomy" id="218491"/>
    <lineage>
        <taxon>Bacteria</taxon>
        <taxon>Pseudomonadati</taxon>
        <taxon>Pseudomonadota</taxon>
        <taxon>Gammaproteobacteria</taxon>
        <taxon>Enterobacterales</taxon>
        <taxon>Pectobacteriaceae</taxon>
        <taxon>Pectobacterium</taxon>
    </lineage>
</organism>
<protein>
    <recommendedName>
        <fullName evidence="1">UDP-N-acetyl-D-mannosaminuronic acid transferase</fullName>
        <shortName evidence="1">UDP-ManNAcA transferase</shortName>
        <ecNumber evidence="1">2.4.1.180</ecNumber>
    </recommendedName>
</protein>
<accession>Q6CZF2</accession>
<comment type="function">
    <text evidence="1">Catalyzes the synthesis of Und-PP-GlcNAc-ManNAcA (Lipid II), the second lipid-linked intermediate involved in enterobacterial common antigen (ECA) synthesis.</text>
</comment>
<comment type="catalytic activity">
    <reaction evidence="1">
        <text>UDP-N-acetyl-alpha-D-mannosaminouronate + N-acetyl-alpha-D-glucosaminyl-di-trans,octa-cis-undecaprenyl diphosphate = beta-D-ManNAcA-(1-&gt;4)-alpha-D-GlcNAc-di-trans,octa-cis-undecaprenyl diphosphate + UDP + H(+)</text>
        <dbReference type="Rhea" id="RHEA:28366"/>
        <dbReference type="ChEBI" id="CHEBI:15378"/>
        <dbReference type="ChEBI" id="CHEBI:58223"/>
        <dbReference type="ChEBI" id="CHEBI:61495"/>
        <dbReference type="ChEBI" id="CHEBI:62959"/>
        <dbReference type="ChEBI" id="CHEBI:70731"/>
        <dbReference type="EC" id="2.4.1.180"/>
    </reaction>
</comment>
<comment type="pathway">
    <text evidence="1">Bacterial outer membrane biogenesis; enterobacterial common antigen biosynthesis.</text>
</comment>
<comment type="similarity">
    <text evidence="1">Belongs to the glycosyltransferase 26 family.</text>
</comment>
<feature type="chain" id="PRO_0000208429" description="UDP-N-acetyl-D-mannosaminuronic acid transferase">
    <location>
        <begin position="1"/>
        <end position="249"/>
    </location>
</feature>